<accession>A1KU10</accession>
<protein>
    <recommendedName>
        <fullName evidence="1">Siroheme synthase</fullName>
    </recommendedName>
    <domain>
        <recommendedName>
            <fullName evidence="1">Uroporphyrinogen-III C-methyltransferase</fullName>
            <shortName evidence="1">Urogen III methylase</shortName>
            <ecNumber evidence="1">2.1.1.107</ecNumber>
        </recommendedName>
        <alternativeName>
            <fullName evidence="1">SUMT</fullName>
        </alternativeName>
        <alternativeName>
            <fullName evidence="1">Uroporphyrinogen III methylase</fullName>
            <shortName evidence="1">UROM</shortName>
        </alternativeName>
    </domain>
    <domain>
        <recommendedName>
            <fullName evidence="1">Precorrin-2 dehydrogenase</fullName>
            <ecNumber evidence="1">1.3.1.76</ecNumber>
        </recommendedName>
    </domain>
    <domain>
        <recommendedName>
            <fullName evidence="1">Sirohydrochlorin ferrochelatase</fullName>
            <ecNumber evidence="1">4.99.1.4</ecNumber>
        </recommendedName>
    </domain>
</protein>
<name>CYSG_NEIMF</name>
<feature type="chain" id="PRO_0000330524" description="Siroheme synthase">
    <location>
        <begin position="1"/>
        <end position="483"/>
    </location>
</feature>
<feature type="region of interest" description="Precorrin-2 dehydrogenase /sirohydrochlorin ferrochelatase" evidence="1">
    <location>
        <begin position="1"/>
        <end position="203"/>
    </location>
</feature>
<feature type="region of interest" description="Uroporphyrinogen-III C-methyltransferase" evidence="1">
    <location>
        <begin position="214"/>
        <end position="483"/>
    </location>
</feature>
<feature type="active site" description="Proton acceptor" evidence="1">
    <location>
        <position position="246"/>
    </location>
</feature>
<feature type="active site" description="Proton donor" evidence="1">
    <location>
        <position position="268"/>
    </location>
</feature>
<feature type="binding site" evidence="1">
    <location>
        <begin position="22"/>
        <end position="23"/>
    </location>
    <ligand>
        <name>NAD(+)</name>
        <dbReference type="ChEBI" id="CHEBI:57540"/>
    </ligand>
</feature>
<feature type="binding site" evidence="1">
    <location>
        <begin position="43"/>
        <end position="44"/>
    </location>
    <ligand>
        <name>NAD(+)</name>
        <dbReference type="ChEBI" id="CHEBI:57540"/>
    </ligand>
</feature>
<feature type="binding site" evidence="1">
    <location>
        <position position="223"/>
    </location>
    <ligand>
        <name>S-adenosyl-L-methionine</name>
        <dbReference type="ChEBI" id="CHEBI:59789"/>
    </ligand>
</feature>
<feature type="binding site" evidence="1">
    <location>
        <begin position="299"/>
        <end position="301"/>
    </location>
    <ligand>
        <name>S-adenosyl-L-methionine</name>
        <dbReference type="ChEBI" id="CHEBI:59789"/>
    </ligand>
</feature>
<feature type="binding site" evidence="1">
    <location>
        <position position="304"/>
    </location>
    <ligand>
        <name>S-adenosyl-L-methionine</name>
        <dbReference type="ChEBI" id="CHEBI:59789"/>
    </ligand>
</feature>
<feature type="binding site" evidence="1">
    <location>
        <begin position="329"/>
        <end position="330"/>
    </location>
    <ligand>
        <name>S-adenosyl-L-methionine</name>
        <dbReference type="ChEBI" id="CHEBI:59789"/>
    </ligand>
</feature>
<feature type="binding site" evidence="1">
    <location>
        <position position="381"/>
    </location>
    <ligand>
        <name>S-adenosyl-L-methionine</name>
        <dbReference type="ChEBI" id="CHEBI:59789"/>
    </ligand>
</feature>
<feature type="binding site" evidence="1">
    <location>
        <position position="410"/>
    </location>
    <ligand>
        <name>S-adenosyl-L-methionine</name>
        <dbReference type="ChEBI" id="CHEBI:59789"/>
    </ligand>
</feature>
<feature type="modified residue" description="Phosphoserine" evidence="1">
    <location>
        <position position="128"/>
    </location>
</feature>
<proteinExistence type="inferred from homology"/>
<reference key="1">
    <citation type="journal article" date="2007" name="PLoS Genet.">
        <title>Meningococcal genetic variation mechanisms viewed through comparative analysis of serogroup C strain FAM18.</title>
        <authorList>
            <person name="Bentley S.D."/>
            <person name="Vernikos G.S."/>
            <person name="Snyder L.A.S."/>
            <person name="Churcher C."/>
            <person name="Arrowsmith C."/>
            <person name="Chillingworth T."/>
            <person name="Cronin A."/>
            <person name="Davis P.H."/>
            <person name="Holroyd N.E."/>
            <person name="Jagels K."/>
            <person name="Maddison M."/>
            <person name="Moule S."/>
            <person name="Rabbinowitsch E."/>
            <person name="Sharp S."/>
            <person name="Unwin L."/>
            <person name="Whitehead S."/>
            <person name="Quail M.A."/>
            <person name="Achtman M."/>
            <person name="Barrell B.G."/>
            <person name="Saunders N.J."/>
            <person name="Parkhill J."/>
        </authorList>
    </citation>
    <scope>NUCLEOTIDE SEQUENCE [LARGE SCALE GENOMIC DNA]</scope>
    <source>
        <strain>ATCC 700532 / DSM 15464 / FAM18</strain>
    </source>
</reference>
<organism>
    <name type="scientific">Neisseria meningitidis serogroup C / serotype 2a (strain ATCC 700532 / DSM 15464 / FAM18)</name>
    <dbReference type="NCBI Taxonomy" id="272831"/>
    <lineage>
        <taxon>Bacteria</taxon>
        <taxon>Pseudomonadati</taxon>
        <taxon>Pseudomonadota</taxon>
        <taxon>Betaproteobacteria</taxon>
        <taxon>Neisseriales</taxon>
        <taxon>Neisseriaceae</taxon>
        <taxon>Neisseria</taxon>
    </lineage>
</organism>
<keyword id="KW-0169">Cobalamin biosynthesis</keyword>
<keyword id="KW-0456">Lyase</keyword>
<keyword id="KW-0489">Methyltransferase</keyword>
<keyword id="KW-0511">Multifunctional enzyme</keyword>
<keyword id="KW-0520">NAD</keyword>
<keyword id="KW-0560">Oxidoreductase</keyword>
<keyword id="KW-0597">Phosphoprotein</keyword>
<keyword id="KW-0627">Porphyrin biosynthesis</keyword>
<keyword id="KW-0949">S-adenosyl-L-methionine</keyword>
<keyword id="KW-0808">Transferase</keyword>
<gene>
    <name evidence="1" type="primary">cysG</name>
    <name type="ordered locus">NMC1096</name>
</gene>
<comment type="function">
    <text evidence="1">Multifunctional enzyme that catalyzes the SAM-dependent methylations of uroporphyrinogen III at position C-2 and C-7 to form precorrin-2 via precorrin-1. Then it catalyzes the NAD-dependent ring dehydrogenation of precorrin-2 to yield sirohydrochlorin. Finally, it catalyzes the ferrochelation of sirohydrochlorin to yield siroheme.</text>
</comment>
<comment type="catalytic activity">
    <reaction evidence="1">
        <text>uroporphyrinogen III + 2 S-adenosyl-L-methionine = precorrin-2 + 2 S-adenosyl-L-homocysteine + H(+)</text>
        <dbReference type="Rhea" id="RHEA:32459"/>
        <dbReference type="ChEBI" id="CHEBI:15378"/>
        <dbReference type="ChEBI" id="CHEBI:57308"/>
        <dbReference type="ChEBI" id="CHEBI:57856"/>
        <dbReference type="ChEBI" id="CHEBI:58827"/>
        <dbReference type="ChEBI" id="CHEBI:59789"/>
        <dbReference type="EC" id="2.1.1.107"/>
    </reaction>
</comment>
<comment type="catalytic activity">
    <reaction evidence="1">
        <text>precorrin-2 + NAD(+) = sirohydrochlorin + NADH + 2 H(+)</text>
        <dbReference type="Rhea" id="RHEA:15613"/>
        <dbReference type="ChEBI" id="CHEBI:15378"/>
        <dbReference type="ChEBI" id="CHEBI:57540"/>
        <dbReference type="ChEBI" id="CHEBI:57945"/>
        <dbReference type="ChEBI" id="CHEBI:58351"/>
        <dbReference type="ChEBI" id="CHEBI:58827"/>
        <dbReference type="EC" id="1.3.1.76"/>
    </reaction>
</comment>
<comment type="catalytic activity">
    <reaction evidence="1">
        <text>siroheme + 2 H(+) = sirohydrochlorin + Fe(2+)</text>
        <dbReference type="Rhea" id="RHEA:24360"/>
        <dbReference type="ChEBI" id="CHEBI:15378"/>
        <dbReference type="ChEBI" id="CHEBI:29033"/>
        <dbReference type="ChEBI" id="CHEBI:58351"/>
        <dbReference type="ChEBI" id="CHEBI:60052"/>
        <dbReference type="EC" id="4.99.1.4"/>
    </reaction>
</comment>
<comment type="pathway">
    <text evidence="1">Cofactor biosynthesis; adenosylcobalamin biosynthesis; precorrin-2 from uroporphyrinogen III: step 1/1.</text>
</comment>
<comment type="pathway">
    <text evidence="1">Cofactor biosynthesis; adenosylcobalamin biosynthesis; sirohydrochlorin from precorrin-2: step 1/1.</text>
</comment>
<comment type="pathway">
    <text evidence="1">Porphyrin-containing compound metabolism; siroheme biosynthesis; precorrin-2 from uroporphyrinogen III: step 1/1.</text>
</comment>
<comment type="pathway">
    <text evidence="1">Porphyrin-containing compound metabolism; siroheme biosynthesis; siroheme from sirohydrochlorin: step 1/1.</text>
</comment>
<comment type="pathway">
    <text evidence="1">Porphyrin-containing compound metabolism; siroheme biosynthesis; sirohydrochlorin from precorrin-2: step 1/1.</text>
</comment>
<comment type="similarity">
    <text evidence="1">In the N-terminal section; belongs to the precorrin-2 dehydrogenase / sirohydrochlorin ferrochelatase family.</text>
</comment>
<comment type="similarity">
    <text evidence="1">In the C-terminal section; belongs to the precorrin methyltransferase family.</text>
</comment>
<evidence type="ECO:0000255" key="1">
    <source>
        <dbReference type="HAMAP-Rule" id="MF_01646"/>
    </source>
</evidence>
<sequence>MNYFPIFANLAGRPVLVVGGGAVAARKISLLLKAGAEVRVAAKHLNAELSALAAENKILWLAEEFRAEHIRTVFLIIAASSDQALNRRVFHLAESCQKPVNVVDDRDHCSFIFPSVIDRNPVQIAVSSSGSAPVLARLLRERLEALLPPSLGDMAEISGRWRDAVKGKLKSVTERRRFWEKQFNGRFAALVKNRQNTLAERELAKQLEQNYQGGFVSLVGAGPGDAGLLTLKGLQEIQQADVVLYDALVSDGILSLVRRDAERIFVGKRARGGRTPQEDTNALMVRLAREGRRVVRLKGGDPFVFGRGGEELETLARHQIPFSVVPGITAAVGATAYAGIPLTHRDYAQSAVFVTGHRKADAPDIEWQTLARSRQTLVIYMGALKAALIAERLQQHGRSPDTPAAVISQGTLPAQKTATGTLANLSELAETAPNPALIVIGEVVGLHEKLAWFGENAKKESNPAEHAYFALDGLGTGQEQQAA</sequence>
<dbReference type="EC" id="2.1.1.107" evidence="1"/>
<dbReference type="EC" id="1.3.1.76" evidence="1"/>
<dbReference type="EC" id="4.99.1.4" evidence="1"/>
<dbReference type="EMBL" id="AM421808">
    <property type="protein sequence ID" value="CAM10351.1"/>
    <property type="molecule type" value="Genomic_DNA"/>
</dbReference>
<dbReference type="RefSeq" id="WP_002239785.1">
    <property type="nucleotide sequence ID" value="NC_008767.1"/>
</dbReference>
<dbReference type="SMR" id="A1KU10"/>
<dbReference type="KEGG" id="nmc:NMC1096"/>
<dbReference type="HOGENOM" id="CLU_011276_2_0_4"/>
<dbReference type="UniPathway" id="UPA00148">
    <property type="reaction ID" value="UER00211"/>
</dbReference>
<dbReference type="UniPathway" id="UPA00148">
    <property type="reaction ID" value="UER00222"/>
</dbReference>
<dbReference type="UniPathway" id="UPA00262">
    <property type="reaction ID" value="UER00211"/>
</dbReference>
<dbReference type="UniPathway" id="UPA00262">
    <property type="reaction ID" value="UER00222"/>
</dbReference>
<dbReference type="UniPathway" id="UPA00262">
    <property type="reaction ID" value="UER00376"/>
</dbReference>
<dbReference type="Proteomes" id="UP000002286">
    <property type="component" value="Chromosome"/>
</dbReference>
<dbReference type="GO" id="GO:0051287">
    <property type="term" value="F:NAD binding"/>
    <property type="evidence" value="ECO:0007669"/>
    <property type="project" value="InterPro"/>
</dbReference>
<dbReference type="GO" id="GO:0043115">
    <property type="term" value="F:precorrin-2 dehydrogenase activity"/>
    <property type="evidence" value="ECO:0007669"/>
    <property type="project" value="UniProtKB-UniRule"/>
</dbReference>
<dbReference type="GO" id="GO:0051266">
    <property type="term" value="F:sirohydrochlorin ferrochelatase activity"/>
    <property type="evidence" value="ECO:0007669"/>
    <property type="project" value="UniProtKB-EC"/>
</dbReference>
<dbReference type="GO" id="GO:0004851">
    <property type="term" value="F:uroporphyrin-III C-methyltransferase activity"/>
    <property type="evidence" value="ECO:0007669"/>
    <property type="project" value="UniProtKB-UniRule"/>
</dbReference>
<dbReference type="GO" id="GO:0009236">
    <property type="term" value="P:cobalamin biosynthetic process"/>
    <property type="evidence" value="ECO:0007669"/>
    <property type="project" value="UniProtKB-UniRule"/>
</dbReference>
<dbReference type="GO" id="GO:0032259">
    <property type="term" value="P:methylation"/>
    <property type="evidence" value="ECO:0007669"/>
    <property type="project" value="UniProtKB-KW"/>
</dbReference>
<dbReference type="GO" id="GO:0019354">
    <property type="term" value="P:siroheme biosynthetic process"/>
    <property type="evidence" value="ECO:0007669"/>
    <property type="project" value="UniProtKB-UniRule"/>
</dbReference>
<dbReference type="CDD" id="cd11642">
    <property type="entry name" value="SUMT"/>
    <property type="match status" value="1"/>
</dbReference>
<dbReference type="FunFam" id="3.30.160.110:FF:000001">
    <property type="entry name" value="Siroheme synthase"/>
    <property type="match status" value="1"/>
</dbReference>
<dbReference type="FunFam" id="3.30.950.10:FF:000001">
    <property type="entry name" value="Siroheme synthase"/>
    <property type="match status" value="1"/>
</dbReference>
<dbReference type="FunFam" id="3.40.1010.10:FF:000001">
    <property type="entry name" value="Siroheme synthase"/>
    <property type="match status" value="1"/>
</dbReference>
<dbReference type="Gene3D" id="3.40.1010.10">
    <property type="entry name" value="Cobalt-precorrin-4 Transmethylase, Domain 1"/>
    <property type="match status" value="1"/>
</dbReference>
<dbReference type="Gene3D" id="3.30.950.10">
    <property type="entry name" value="Methyltransferase, Cobalt-precorrin-4 Transmethylase, Domain 2"/>
    <property type="match status" value="1"/>
</dbReference>
<dbReference type="Gene3D" id="3.40.50.720">
    <property type="entry name" value="NAD(P)-binding Rossmann-like Domain"/>
    <property type="match status" value="1"/>
</dbReference>
<dbReference type="Gene3D" id="1.10.8.210">
    <property type="entry name" value="Sirohaem synthase, dimerisation domain"/>
    <property type="match status" value="1"/>
</dbReference>
<dbReference type="Gene3D" id="3.30.160.110">
    <property type="entry name" value="Siroheme synthase, domain 2"/>
    <property type="match status" value="1"/>
</dbReference>
<dbReference type="HAMAP" id="MF_01646">
    <property type="entry name" value="Siroheme_synth"/>
    <property type="match status" value="1"/>
</dbReference>
<dbReference type="InterPro" id="IPR000878">
    <property type="entry name" value="4pyrrol_Mease"/>
</dbReference>
<dbReference type="InterPro" id="IPR035996">
    <property type="entry name" value="4pyrrol_Methylase_sf"/>
</dbReference>
<dbReference type="InterPro" id="IPR014777">
    <property type="entry name" value="4pyrrole_Mease_sub1"/>
</dbReference>
<dbReference type="InterPro" id="IPR014776">
    <property type="entry name" value="4pyrrole_Mease_sub2"/>
</dbReference>
<dbReference type="InterPro" id="IPR006366">
    <property type="entry name" value="CobA/CysG_C"/>
</dbReference>
<dbReference type="InterPro" id="IPR036291">
    <property type="entry name" value="NAD(P)-bd_dom_sf"/>
</dbReference>
<dbReference type="InterPro" id="IPR050161">
    <property type="entry name" value="Siro_Cobalamin_biosynth"/>
</dbReference>
<dbReference type="InterPro" id="IPR037115">
    <property type="entry name" value="Sirohaem_synt_dimer_dom_sf"/>
</dbReference>
<dbReference type="InterPro" id="IPR012409">
    <property type="entry name" value="Sirohaem_synth"/>
</dbReference>
<dbReference type="InterPro" id="IPR028281">
    <property type="entry name" value="Sirohaem_synthase_central"/>
</dbReference>
<dbReference type="InterPro" id="IPR019478">
    <property type="entry name" value="Sirohaem_synthase_dimer_dom"/>
</dbReference>
<dbReference type="InterPro" id="IPR006367">
    <property type="entry name" value="Sirohaem_synthase_N"/>
</dbReference>
<dbReference type="InterPro" id="IPR003043">
    <property type="entry name" value="Uropor_MeTrfase_CS"/>
</dbReference>
<dbReference type="NCBIfam" id="TIGR01469">
    <property type="entry name" value="cobA_cysG_Cterm"/>
    <property type="match status" value="1"/>
</dbReference>
<dbReference type="NCBIfam" id="TIGR01470">
    <property type="entry name" value="cysG_Nterm"/>
    <property type="match status" value="1"/>
</dbReference>
<dbReference type="NCBIfam" id="NF004790">
    <property type="entry name" value="PRK06136.1"/>
    <property type="match status" value="1"/>
</dbReference>
<dbReference type="NCBIfam" id="NF007922">
    <property type="entry name" value="PRK10637.1"/>
    <property type="match status" value="1"/>
</dbReference>
<dbReference type="PANTHER" id="PTHR45790:SF1">
    <property type="entry name" value="SIROHEME SYNTHASE"/>
    <property type="match status" value="1"/>
</dbReference>
<dbReference type="PANTHER" id="PTHR45790">
    <property type="entry name" value="SIROHEME SYNTHASE-RELATED"/>
    <property type="match status" value="1"/>
</dbReference>
<dbReference type="Pfam" id="PF10414">
    <property type="entry name" value="CysG_dimeriser"/>
    <property type="match status" value="1"/>
</dbReference>
<dbReference type="Pfam" id="PF13241">
    <property type="entry name" value="NAD_binding_7"/>
    <property type="match status" value="1"/>
</dbReference>
<dbReference type="Pfam" id="PF14824">
    <property type="entry name" value="Sirohm_synth_M"/>
    <property type="match status" value="1"/>
</dbReference>
<dbReference type="Pfam" id="PF00590">
    <property type="entry name" value="TP_methylase"/>
    <property type="match status" value="1"/>
</dbReference>
<dbReference type="PIRSF" id="PIRSF036426">
    <property type="entry name" value="Sirohaem_synth"/>
    <property type="match status" value="1"/>
</dbReference>
<dbReference type="SUPFAM" id="SSF51735">
    <property type="entry name" value="NAD(P)-binding Rossmann-fold domains"/>
    <property type="match status" value="1"/>
</dbReference>
<dbReference type="SUPFAM" id="SSF75615">
    <property type="entry name" value="Siroheme synthase middle domains-like"/>
    <property type="match status" value="1"/>
</dbReference>
<dbReference type="SUPFAM" id="SSF53790">
    <property type="entry name" value="Tetrapyrrole methylase"/>
    <property type="match status" value="1"/>
</dbReference>
<dbReference type="PROSITE" id="PS00839">
    <property type="entry name" value="SUMT_1"/>
    <property type="match status" value="1"/>
</dbReference>
<dbReference type="PROSITE" id="PS00840">
    <property type="entry name" value="SUMT_2"/>
    <property type="match status" value="1"/>
</dbReference>